<gene>
    <name type="primary">ubtd2</name>
    <name type="ORF">zgc:91797</name>
</gene>
<keyword id="KW-0963">Cytoplasm</keyword>
<keyword id="KW-1185">Reference proteome</keyword>
<name>UBTD2_DANRE</name>
<protein>
    <recommendedName>
        <fullName>Ubiquitin domain-containing protein 2</fullName>
    </recommendedName>
</protein>
<comment type="subcellular location">
    <subcellularLocation>
        <location evidence="1">Cytoplasm</location>
    </subcellularLocation>
</comment>
<evidence type="ECO:0000250" key="1"/>
<evidence type="ECO:0000255" key="2">
    <source>
        <dbReference type="PROSITE-ProRule" id="PRU00214"/>
    </source>
</evidence>
<evidence type="ECO:0000256" key="3">
    <source>
        <dbReference type="SAM" id="MobiDB-lite"/>
    </source>
</evidence>
<reference key="1">
    <citation type="submission" date="2004-07" db="EMBL/GenBank/DDBJ databases">
        <authorList>
            <consortium name="NIH - Zebrafish Gene Collection (ZGC) project"/>
        </authorList>
    </citation>
    <scope>NUCLEOTIDE SEQUENCE [LARGE SCALE MRNA]</scope>
</reference>
<dbReference type="EMBL" id="BC076510">
    <property type="protein sequence ID" value="AAH76510.1"/>
    <property type="molecule type" value="mRNA"/>
</dbReference>
<dbReference type="RefSeq" id="NP_001002718.2">
    <property type="nucleotide sequence ID" value="NM_001002718.2"/>
</dbReference>
<dbReference type="SMR" id="Q6DG43"/>
<dbReference type="FunCoup" id="Q6DG43">
    <property type="interactions" value="997"/>
</dbReference>
<dbReference type="STRING" id="7955.ENSDARP00000117284"/>
<dbReference type="PaxDb" id="7955-ENSDARP00000117284"/>
<dbReference type="Ensembl" id="ENSDART00000183368">
    <property type="protein sequence ID" value="ENSDARP00000145522"/>
    <property type="gene ID" value="ENSDARG00000109249"/>
</dbReference>
<dbReference type="GeneID" id="436991"/>
<dbReference type="KEGG" id="dre:436991"/>
<dbReference type="AGR" id="ZFIN:ZDB-GENE-040718-473"/>
<dbReference type="CTD" id="92181"/>
<dbReference type="ZFIN" id="ZDB-GENE-040718-473">
    <property type="gene designation" value="ubtd2"/>
</dbReference>
<dbReference type="eggNOG" id="KOG0013">
    <property type="taxonomic scope" value="Eukaryota"/>
</dbReference>
<dbReference type="InParanoid" id="Q6DG43"/>
<dbReference type="OMA" id="GTGGECQ"/>
<dbReference type="OrthoDB" id="1640476at2759"/>
<dbReference type="PhylomeDB" id="Q6DG43"/>
<dbReference type="PRO" id="PR:Q6DG43"/>
<dbReference type="Proteomes" id="UP000000437">
    <property type="component" value="Alternate scaffold 21"/>
</dbReference>
<dbReference type="Proteomes" id="UP000000437">
    <property type="component" value="Chromosome 21"/>
</dbReference>
<dbReference type="Bgee" id="ENSDARG00000109249">
    <property type="expression patterns" value="Expressed in multicellular organism"/>
</dbReference>
<dbReference type="GO" id="GO:0005737">
    <property type="term" value="C:cytoplasm"/>
    <property type="evidence" value="ECO:0007669"/>
    <property type="project" value="UniProtKB-SubCell"/>
</dbReference>
<dbReference type="Gene3D" id="3.10.20.90">
    <property type="entry name" value="Phosphatidylinositol 3-kinase Catalytic Subunit, Chain A, domain 1"/>
    <property type="match status" value="1"/>
</dbReference>
<dbReference type="Gene3D" id="1.20.225.20">
    <property type="entry name" value="Ub domain-containing protein, DC-UbP/UBTD2, N-terminal domain"/>
    <property type="match status" value="1"/>
</dbReference>
<dbReference type="InterPro" id="IPR032752">
    <property type="entry name" value="DC-UbP/UBTD2_N"/>
</dbReference>
<dbReference type="InterPro" id="IPR038169">
    <property type="entry name" value="DC-UbP/UBTD2_N_sf"/>
</dbReference>
<dbReference type="InterPro" id="IPR000626">
    <property type="entry name" value="Ubiquitin-like_dom"/>
</dbReference>
<dbReference type="InterPro" id="IPR029071">
    <property type="entry name" value="Ubiquitin-like_domsf"/>
</dbReference>
<dbReference type="InterPro" id="IPR039869">
    <property type="entry name" value="UBTD1/2"/>
</dbReference>
<dbReference type="PANTHER" id="PTHR13609">
    <property type="entry name" value="UBIQUITIN DOMAIN CONTAINING 1 PROTEIN-RELATED"/>
    <property type="match status" value="1"/>
</dbReference>
<dbReference type="Pfam" id="PF16455">
    <property type="entry name" value="UBD"/>
    <property type="match status" value="1"/>
</dbReference>
<dbReference type="Pfam" id="PF00240">
    <property type="entry name" value="ubiquitin"/>
    <property type="match status" value="1"/>
</dbReference>
<dbReference type="SUPFAM" id="SSF54236">
    <property type="entry name" value="Ubiquitin-like"/>
    <property type="match status" value="1"/>
</dbReference>
<dbReference type="PROSITE" id="PS50053">
    <property type="entry name" value="UBIQUITIN_2"/>
    <property type="match status" value="1"/>
</dbReference>
<sequence length="240" mass="26723">MGGCVGSHHDSSGSLNENSDGTGVALGRNQPLKREKPKWKSDYPMTDGQLRSKRDEFWDTAPAFEGRKEIWDALKAAAQAFESNDHELAQAIIDGASITLPHGALTECYDELGNRYQLPVYCLSPPVNMIEEKSESETIEVPEAPASEGQECQLRLRLSTGRDLRLAVRTSDSVQQMKRRLQTQEGVAATSQRWFFSGRPLTDKMKLEELKISRDYVVQVIVSQPPTTPPLPQNPTPVEN</sequence>
<proteinExistence type="evidence at transcript level"/>
<accession>Q6DG43</accession>
<feature type="chain" id="PRO_0000244334" description="Ubiquitin domain-containing protein 2">
    <location>
        <begin position="1"/>
        <end position="240"/>
    </location>
</feature>
<feature type="domain" description="Ubiquitin-like" evidence="2">
    <location>
        <begin position="152"/>
        <end position="227"/>
    </location>
</feature>
<feature type="region of interest" description="Disordered" evidence="3">
    <location>
        <begin position="1"/>
        <end position="48"/>
    </location>
</feature>
<feature type="compositionally biased region" description="Polar residues" evidence="3">
    <location>
        <begin position="12"/>
        <end position="21"/>
    </location>
</feature>
<feature type="compositionally biased region" description="Basic and acidic residues" evidence="3">
    <location>
        <begin position="32"/>
        <end position="41"/>
    </location>
</feature>
<organism>
    <name type="scientific">Danio rerio</name>
    <name type="common">Zebrafish</name>
    <name type="synonym">Brachydanio rerio</name>
    <dbReference type="NCBI Taxonomy" id="7955"/>
    <lineage>
        <taxon>Eukaryota</taxon>
        <taxon>Metazoa</taxon>
        <taxon>Chordata</taxon>
        <taxon>Craniata</taxon>
        <taxon>Vertebrata</taxon>
        <taxon>Euteleostomi</taxon>
        <taxon>Actinopterygii</taxon>
        <taxon>Neopterygii</taxon>
        <taxon>Teleostei</taxon>
        <taxon>Ostariophysi</taxon>
        <taxon>Cypriniformes</taxon>
        <taxon>Danionidae</taxon>
        <taxon>Danioninae</taxon>
        <taxon>Danio</taxon>
    </lineage>
</organism>